<feature type="chain" id="PRO_0000442579" description="Protein ORFV073">
    <location>
        <begin position="1"/>
        <end position="188"/>
    </location>
</feature>
<protein>
    <recommendedName>
        <fullName>Protein ORFV073</fullName>
    </recommendedName>
</protein>
<sequence>MARRARFSPRLHIPAARAALGPHLHFPRRRLVLRHCGVRAFVGDAIVSKKEMTNPLCAQAIVFGNGFVETYVRSLDPRLLGAYHALSRPVCERPLFAVRGWRRLFPIVARRLDAVERRTRRVLRSMCRTYTTCMSADRAAAVSHPVMRRRWFGHRATKTRRARLRRRCRNRSSKRRAERRKRFCNYCP</sequence>
<comment type="function">
    <text evidence="1">Plays a role in the inhibition of the host NF-kappa-B pathway early during infection. Prevents the host RELA subunit from reaching the nucleus and activate transcription.</text>
</comment>
<comment type="subunit">
    <text evidence="1">Interacts with host IKBKG; this interaction inhibits host NF-kappa-B pathway activation.</text>
</comment>
<comment type="subcellular location">
    <subcellularLocation>
        <location evidence="1">Host nucleus</location>
    </subcellularLocation>
    <subcellularLocation>
        <location evidence="1">Host cytoplasm</location>
        <location evidence="1">Host perinuclear region</location>
    </subcellularLocation>
    <subcellularLocation>
        <location evidence="1">Virion</location>
    </subcellularLocation>
</comment>
<evidence type="ECO:0000269" key="1">
    <source>
    </source>
</evidence>
<name>V073_ORFSA</name>
<organismHost>
    <name type="scientific">Capra hircus</name>
    <name type="common">Goat</name>
    <dbReference type="NCBI Taxonomy" id="9925"/>
</organismHost>
<organismHost>
    <name type="scientific">Homo sapiens</name>
    <name type="common">Human</name>
    <dbReference type="NCBI Taxonomy" id="9606"/>
</organismHost>
<organismHost>
    <name type="scientific">Ovis aries</name>
    <name type="common">Sheep</name>
    <dbReference type="NCBI Taxonomy" id="9940"/>
</organismHost>
<organism>
    <name type="scientific">Orf virus (strain Goat/Texas/SA00/2000)</name>
    <name type="common">OV-SA00</name>
    <name type="synonym">Orf virus-San Angelo 2000</name>
    <dbReference type="NCBI Taxonomy" id="647330"/>
    <lineage>
        <taxon>Viruses</taxon>
        <taxon>Varidnaviria</taxon>
        <taxon>Bamfordvirae</taxon>
        <taxon>Nucleocytoviricota</taxon>
        <taxon>Pokkesviricetes</taxon>
        <taxon>Chitovirales</taxon>
        <taxon>Poxviridae</taxon>
        <taxon>Chordopoxvirinae</taxon>
        <taxon>Parapoxvirus</taxon>
        <taxon>Orf virus</taxon>
    </lineage>
</organism>
<dbReference type="EMBL" id="AY386264">
    <property type="protein sequence ID" value="AAR98298.1"/>
    <property type="molecule type" value="Genomic_DNA"/>
</dbReference>
<dbReference type="RefSeq" id="NP_957850.1">
    <property type="nucleotide sequence ID" value="NC_005336.1"/>
</dbReference>
<dbReference type="SMR" id="Q6TVP7"/>
<dbReference type="GeneID" id="2947673"/>
<dbReference type="KEGG" id="vg:2947673"/>
<dbReference type="Proteomes" id="UP000000870">
    <property type="component" value="Segment"/>
</dbReference>
<dbReference type="GO" id="GO:0042025">
    <property type="term" value="C:host cell nucleus"/>
    <property type="evidence" value="ECO:0007669"/>
    <property type="project" value="UniProtKB-SubCell"/>
</dbReference>
<dbReference type="GO" id="GO:0044220">
    <property type="term" value="C:host cell perinuclear region of cytoplasm"/>
    <property type="evidence" value="ECO:0007669"/>
    <property type="project" value="UniProtKB-SubCell"/>
</dbReference>
<dbReference type="GO" id="GO:0044423">
    <property type="term" value="C:virion component"/>
    <property type="evidence" value="ECO:0007669"/>
    <property type="project" value="UniProtKB-KW"/>
</dbReference>
<dbReference type="GO" id="GO:0085034">
    <property type="term" value="P:symbiont-mediated suppression of host NF-kappaB cascade"/>
    <property type="evidence" value="ECO:0007669"/>
    <property type="project" value="UniProtKB-KW"/>
</dbReference>
<reference key="1">
    <citation type="journal article" date="2004" name="J. Virol.">
        <title>Genomes of the parapoxviruses ORF virus and bovine papular stomatitis virus.</title>
        <authorList>
            <person name="Delhon G."/>
            <person name="Tulman E.R."/>
            <person name="Afonso C.L."/>
            <person name="Lu Z."/>
            <person name="de la Concha-Bermejillo A."/>
            <person name="Lehmkuhl H.D."/>
            <person name="Piccone M.E."/>
            <person name="Kutish G.F."/>
            <person name="Rock D.L."/>
        </authorList>
    </citation>
    <scope>NUCLEOTIDE SEQUENCE [LARGE SCALE GENOMIC DNA]</scope>
</reference>
<reference key="2">
    <citation type="journal article" date="2017" name="PLoS Pathog.">
        <title>A parapoxviral virion protein inhibits NF-kappaB signaling early in infection.</title>
        <authorList>
            <person name="Khatiwada S."/>
            <person name="Delhon G."/>
            <person name="Nagendraprabhu P."/>
            <person name="Chaulagain S."/>
            <person name="Luo S."/>
            <person name="Diel D.G."/>
            <person name="Flores E.F."/>
            <person name="Rock D.L."/>
        </authorList>
    </citation>
    <scope>FUNCTION</scope>
    <scope>SUBCELLULAR LOCATION</scope>
    <scope>INTERACTION WITH HOST IKBKG</scope>
</reference>
<proteinExistence type="evidence at protein level"/>
<keyword id="KW-1035">Host cytoplasm</keyword>
<keyword id="KW-1048">Host nucleus</keyword>
<keyword id="KW-0945">Host-virus interaction</keyword>
<keyword id="KW-1100">Inhibition of host NF-kappa-B by virus</keyword>
<keyword id="KW-1185">Reference proteome</keyword>
<keyword id="KW-0946">Virion</keyword>
<accession>Q6TVP7</accession>